<accession>Q1IL12</accession>
<dbReference type="EMBL" id="CP000360">
    <property type="protein sequence ID" value="ABF42438.1"/>
    <property type="molecule type" value="Genomic_DNA"/>
</dbReference>
<dbReference type="RefSeq" id="WP_011524237.1">
    <property type="nucleotide sequence ID" value="NC_008009.1"/>
</dbReference>
<dbReference type="SMR" id="Q1IL12"/>
<dbReference type="STRING" id="204669.Acid345_3437"/>
<dbReference type="EnsemblBacteria" id="ABF42438">
    <property type="protein sequence ID" value="ABF42438"/>
    <property type="gene ID" value="Acid345_3437"/>
</dbReference>
<dbReference type="KEGG" id="aba:Acid345_3437"/>
<dbReference type="eggNOG" id="COG2220">
    <property type="taxonomic scope" value="Bacteria"/>
</dbReference>
<dbReference type="HOGENOM" id="CLU_070010_4_0_0"/>
<dbReference type="OrthoDB" id="9789133at2"/>
<dbReference type="Proteomes" id="UP000002432">
    <property type="component" value="Chromosome"/>
</dbReference>
<dbReference type="GO" id="GO:0016787">
    <property type="term" value="F:hydrolase activity"/>
    <property type="evidence" value="ECO:0007669"/>
    <property type="project" value="UniProtKB-UniRule"/>
</dbReference>
<dbReference type="Gene3D" id="3.60.15.10">
    <property type="entry name" value="Ribonuclease Z/Hydroxyacylglutathione hydrolase-like"/>
    <property type="match status" value="1"/>
</dbReference>
<dbReference type="HAMAP" id="MF_00457">
    <property type="entry name" value="UPF0173"/>
    <property type="match status" value="1"/>
</dbReference>
<dbReference type="InterPro" id="IPR001279">
    <property type="entry name" value="Metallo-B-lactamas"/>
</dbReference>
<dbReference type="InterPro" id="IPR036866">
    <property type="entry name" value="RibonucZ/Hydroxyglut_hydro"/>
</dbReference>
<dbReference type="InterPro" id="IPR022877">
    <property type="entry name" value="UPF0173"/>
</dbReference>
<dbReference type="InterPro" id="IPR050114">
    <property type="entry name" value="UPF0173_UPF0282_UlaG_hydrolase"/>
</dbReference>
<dbReference type="NCBIfam" id="NF001911">
    <property type="entry name" value="PRK00685.1"/>
    <property type="match status" value="1"/>
</dbReference>
<dbReference type="PANTHER" id="PTHR43546:SF3">
    <property type="entry name" value="UPF0173 METAL-DEPENDENT HYDROLASE MJ1163"/>
    <property type="match status" value="1"/>
</dbReference>
<dbReference type="PANTHER" id="PTHR43546">
    <property type="entry name" value="UPF0173 METAL-DEPENDENT HYDROLASE MJ1163-RELATED"/>
    <property type="match status" value="1"/>
</dbReference>
<dbReference type="Pfam" id="PF12706">
    <property type="entry name" value="Lactamase_B_2"/>
    <property type="match status" value="1"/>
</dbReference>
<dbReference type="SMART" id="SM00849">
    <property type="entry name" value="Lactamase_B"/>
    <property type="match status" value="1"/>
</dbReference>
<dbReference type="SUPFAM" id="SSF56281">
    <property type="entry name" value="Metallo-hydrolase/oxidoreductase"/>
    <property type="match status" value="1"/>
</dbReference>
<organism>
    <name type="scientific">Koribacter versatilis (strain Ellin345)</name>
    <dbReference type="NCBI Taxonomy" id="204669"/>
    <lineage>
        <taxon>Bacteria</taxon>
        <taxon>Pseudomonadati</taxon>
        <taxon>Acidobacteriota</taxon>
        <taxon>Terriglobia</taxon>
        <taxon>Terriglobales</taxon>
        <taxon>Candidatus Korobacteraceae</taxon>
        <taxon>Candidatus Korobacter</taxon>
    </lineage>
</organism>
<comment type="similarity">
    <text evidence="1">Belongs to the UPF0173 family.</text>
</comment>
<evidence type="ECO:0000255" key="1">
    <source>
        <dbReference type="HAMAP-Rule" id="MF_00457"/>
    </source>
</evidence>
<name>Y3437_KORVE</name>
<keyword id="KW-0378">Hydrolase</keyword>
<keyword id="KW-1185">Reference proteome</keyword>
<feature type="chain" id="PRO_0000367156" description="UPF0173 metal-dependent hydrolase Acid345_3437">
    <location>
        <begin position="1"/>
        <end position="233"/>
    </location>
</feature>
<protein>
    <recommendedName>
        <fullName evidence="1">UPF0173 metal-dependent hydrolase Acid345_3437</fullName>
    </recommendedName>
</protein>
<reference key="1">
    <citation type="journal article" date="2009" name="Appl. Environ. Microbiol.">
        <title>Three genomes from the phylum Acidobacteria provide insight into the lifestyles of these microorganisms in soils.</title>
        <authorList>
            <person name="Ward N.L."/>
            <person name="Challacombe J.F."/>
            <person name="Janssen P.H."/>
            <person name="Henrissat B."/>
            <person name="Coutinho P.M."/>
            <person name="Wu M."/>
            <person name="Xie G."/>
            <person name="Haft D.H."/>
            <person name="Sait M."/>
            <person name="Badger J."/>
            <person name="Barabote R.D."/>
            <person name="Bradley B."/>
            <person name="Brettin T.S."/>
            <person name="Brinkac L.M."/>
            <person name="Bruce D."/>
            <person name="Creasy T."/>
            <person name="Daugherty S.C."/>
            <person name="Davidsen T.M."/>
            <person name="DeBoy R.T."/>
            <person name="Detter J.C."/>
            <person name="Dodson R.J."/>
            <person name="Durkin A.S."/>
            <person name="Ganapathy A."/>
            <person name="Gwinn-Giglio M."/>
            <person name="Han C.S."/>
            <person name="Khouri H."/>
            <person name="Kiss H."/>
            <person name="Kothari S.P."/>
            <person name="Madupu R."/>
            <person name="Nelson K.E."/>
            <person name="Nelson W.C."/>
            <person name="Paulsen I."/>
            <person name="Penn K."/>
            <person name="Ren Q."/>
            <person name="Rosovitz M.J."/>
            <person name="Selengut J.D."/>
            <person name="Shrivastava S."/>
            <person name="Sullivan S.A."/>
            <person name="Tapia R."/>
            <person name="Thompson L.S."/>
            <person name="Watkins K.L."/>
            <person name="Yang Q."/>
            <person name="Yu C."/>
            <person name="Zafar N."/>
            <person name="Zhou L."/>
            <person name="Kuske C.R."/>
        </authorList>
    </citation>
    <scope>NUCLEOTIDE SEQUENCE [LARGE SCALE GENOMIC DNA]</scope>
    <source>
        <strain>Ellin345</strain>
    </source>
</reference>
<proteinExistence type="inferred from homology"/>
<gene>
    <name type="ordered locus">Acid345_3437</name>
</gene>
<sequence length="233" mass="25747">MDLQGLKITWLGHATFRVVTPKGTHILIDPWVMGNPACPETEKQVKKVDVMLITHGHFDHIGDAVEIAKKHSPKVVCIPEMGAWLQKKGVKNVAEMNKGGTQHVGDIAVTMVHAVHSCGITDGDQVVYGGEACGYVLKFDNDVTLYHAGDTMAFSDMKIIHELWRPQIAMLPIGDHYTMDPRQAAYAAELLQPKAIIPMHFGTFPVLTGKPSELEKFVEVCDVHEMKPGETWS</sequence>